<dbReference type="EC" id="2.3.1.35" evidence="1"/>
<dbReference type="EC" id="2.3.1.1" evidence="1"/>
<dbReference type="EMBL" id="CU329671">
    <property type="protein sequence ID" value="CAA22204.1"/>
    <property type="molecule type" value="Genomic_DNA"/>
</dbReference>
<dbReference type="PIR" id="T39350">
    <property type="entry name" value="T39350"/>
</dbReference>
<dbReference type="SMR" id="O94346"/>
<dbReference type="BioGRID" id="276342">
    <property type="interactions" value="48"/>
</dbReference>
<dbReference type="FunCoup" id="O94346">
    <property type="interactions" value="190"/>
</dbReference>
<dbReference type="STRING" id="284812.O94346"/>
<dbReference type="MEROPS" id="T05.001"/>
<dbReference type="PaxDb" id="4896-SPBC1271.14.1"/>
<dbReference type="EnsemblFungi" id="SPBC1271.14.1">
    <property type="protein sequence ID" value="SPBC1271.14.1:pep"/>
    <property type="gene ID" value="SPBC1271.14"/>
</dbReference>
<dbReference type="KEGG" id="spo:2539792"/>
<dbReference type="PomBase" id="SPBC1271.14"/>
<dbReference type="VEuPathDB" id="FungiDB:SPBC1271.14"/>
<dbReference type="eggNOG" id="KOG2786">
    <property type="taxonomic scope" value="Eukaryota"/>
</dbReference>
<dbReference type="HOGENOM" id="CLU_027172_1_0_1"/>
<dbReference type="InParanoid" id="O94346"/>
<dbReference type="OMA" id="WGRIVMA"/>
<dbReference type="PhylomeDB" id="O94346"/>
<dbReference type="UniPathway" id="UPA00068">
    <property type="reaction ID" value="UER00106"/>
</dbReference>
<dbReference type="UniPathway" id="UPA00068">
    <property type="reaction ID" value="UER00111"/>
</dbReference>
<dbReference type="PRO" id="PR:O94346"/>
<dbReference type="Proteomes" id="UP000002485">
    <property type="component" value="Chromosome II"/>
</dbReference>
<dbReference type="GO" id="GO:0005759">
    <property type="term" value="C:mitochondrial matrix"/>
    <property type="evidence" value="ECO:0000318"/>
    <property type="project" value="GO_Central"/>
</dbReference>
<dbReference type="GO" id="GO:0005739">
    <property type="term" value="C:mitochondrion"/>
    <property type="evidence" value="ECO:0007005"/>
    <property type="project" value="PomBase"/>
</dbReference>
<dbReference type="GO" id="GO:0004358">
    <property type="term" value="F:glutamate N-acetyltransferase activity"/>
    <property type="evidence" value="ECO:0000250"/>
    <property type="project" value="PomBase"/>
</dbReference>
<dbReference type="GO" id="GO:0004042">
    <property type="term" value="F:L-glutamate N-acetyltransferase activity"/>
    <property type="evidence" value="ECO:0000318"/>
    <property type="project" value="GO_Central"/>
</dbReference>
<dbReference type="GO" id="GO:0042450">
    <property type="term" value="P:arginine biosynthetic process via ornithine"/>
    <property type="evidence" value="ECO:0000269"/>
    <property type="project" value="PomBase"/>
</dbReference>
<dbReference type="GO" id="GO:0006536">
    <property type="term" value="P:glutamate metabolic process"/>
    <property type="evidence" value="ECO:0000303"/>
    <property type="project" value="PomBase"/>
</dbReference>
<dbReference type="GO" id="GO:0006526">
    <property type="term" value="P:L-arginine biosynthetic process"/>
    <property type="evidence" value="ECO:0007669"/>
    <property type="project" value="UniProtKB-UniRule"/>
</dbReference>
<dbReference type="GO" id="GO:0006592">
    <property type="term" value="P:ornithine biosynthetic process"/>
    <property type="evidence" value="ECO:0000318"/>
    <property type="project" value="GO_Central"/>
</dbReference>
<dbReference type="CDD" id="cd02152">
    <property type="entry name" value="OAT"/>
    <property type="match status" value="1"/>
</dbReference>
<dbReference type="FunFam" id="3.60.70.12:FF:000001">
    <property type="entry name" value="Arginine biosynthesis bifunctional protein ArgJ, chloroplastic"/>
    <property type="match status" value="1"/>
</dbReference>
<dbReference type="FunFam" id="3.10.20.340:FF:000002">
    <property type="entry name" value="Arginine biosynthesis bifunctional protein ArgJ, mitochondrial"/>
    <property type="match status" value="1"/>
</dbReference>
<dbReference type="FunFam" id="3.30.2330.10:FF:000001">
    <property type="entry name" value="Arginine biosynthesis bifunctional protein ArgJ, mitochondrial"/>
    <property type="match status" value="1"/>
</dbReference>
<dbReference type="Gene3D" id="3.30.2330.10">
    <property type="entry name" value="arginine biosynthesis bifunctional protein suprefamily"/>
    <property type="match status" value="1"/>
</dbReference>
<dbReference type="Gene3D" id="3.10.20.340">
    <property type="entry name" value="ArgJ beta chain, C-terminal domain"/>
    <property type="match status" value="1"/>
</dbReference>
<dbReference type="Gene3D" id="3.60.70.12">
    <property type="entry name" value="L-amino peptidase D-ALA esterase/amidase"/>
    <property type="match status" value="1"/>
</dbReference>
<dbReference type="HAMAP" id="MF_01106">
    <property type="entry name" value="ArgJ"/>
    <property type="match status" value="1"/>
</dbReference>
<dbReference type="InterPro" id="IPR002813">
    <property type="entry name" value="Arg_biosynth_ArgJ"/>
</dbReference>
<dbReference type="InterPro" id="IPR016117">
    <property type="entry name" value="ArgJ-like_dom_sf"/>
</dbReference>
<dbReference type="InterPro" id="IPR042195">
    <property type="entry name" value="ArgJ_beta_C"/>
</dbReference>
<dbReference type="NCBIfam" id="TIGR00120">
    <property type="entry name" value="ArgJ"/>
    <property type="match status" value="1"/>
</dbReference>
<dbReference type="NCBIfam" id="NF003802">
    <property type="entry name" value="PRK05388.1"/>
    <property type="match status" value="1"/>
</dbReference>
<dbReference type="PANTHER" id="PTHR23100">
    <property type="entry name" value="ARGININE BIOSYNTHESIS BIFUNCTIONAL PROTEIN ARGJ"/>
    <property type="match status" value="1"/>
</dbReference>
<dbReference type="PANTHER" id="PTHR23100:SF0">
    <property type="entry name" value="ARGININE BIOSYNTHESIS BIFUNCTIONAL PROTEIN ARGJ, MITOCHONDRIAL"/>
    <property type="match status" value="1"/>
</dbReference>
<dbReference type="Pfam" id="PF01960">
    <property type="entry name" value="ArgJ"/>
    <property type="match status" value="1"/>
</dbReference>
<dbReference type="SUPFAM" id="SSF56266">
    <property type="entry name" value="DmpA/ArgJ-like"/>
    <property type="match status" value="1"/>
</dbReference>
<name>ARGJ_SCHPO</name>
<organism>
    <name type="scientific">Schizosaccharomyces pombe (strain 972 / ATCC 24843)</name>
    <name type="common">Fission yeast</name>
    <dbReference type="NCBI Taxonomy" id="284812"/>
    <lineage>
        <taxon>Eukaryota</taxon>
        <taxon>Fungi</taxon>
        <taxon>Dikarya</taxon>
        <taxon>Ascomycota</taxon>
        <taxon>Taphrinomycotina</taxon>
        <taxon>Schizosaccharomycetes</taxon>
        <taxon>Schizosaccharomycetales</taxon>
        <taxon>Schizosaccharomycetaceae</taxon>
        <taxon>Schizosaccharomyces</taxon>
    </lineage>
</organism>
<feature type="chain" id="PRO_0000310325" description="Arginine biosynthesis bifunctional protein ArgJ alpha chain" evidence="1">
    <location>
        <begin position="1"/>
        <end position="225"/>
    </location>
</feature>
<feature type="chain" id="PRO_0000397971" description="Arginine biosynthesis bifunctional protein ArgJ beta chain" evidence="1">
    <location>
        <begin position="226"/>
        <end position="445"/>
    </location>
</feature>
<feature type="active site" description="Nucleophile" evidence="1">
    <location>
        <position position="226"/>
    </location>
</feature>
<feature type="binding site" evidence="1">
    <location>
        <position position="189"/>
    </location>
    <ligand>
        <name>substrate</name>
    </ligand>
</feature>
<feature type="binding site" evidence="1">
    <location>
        <position position="215"/>
    </location>
    <ligand>
        <name>substrate</name>
    </ligand>
</feature>
<feature type="binding site" evidence="1">
    <location>
        <position position="226"/>
    </location>
    <ligand>
        <name>substrate</name>
    </ligand>
</feature>
<feature type="binding site" evidence="1">
    <location>
        <position position="312"/>
    </location>
    <ligand>
        <name>substrate</name>
    </ligand>
</feature>
<feature type="binding site" evidence="1">
    <location>
        <position position="440"/>
    </location>
    <ligand>
        <name>substrate</name>
    </ligand>
</feature>
<feature type="binding site" evidence="1">
    <location>
        <position position="445"/>
    </location>
    <ligand>
        <name>substrate</name>
    </ligand>
</feature>
<feature type="site" description="Involved in the stabilization of negative charge on the oxyanion by the formation of the oxyanion hole" evidence="1">
    <location>
        <position position="150"/>
    </location>
</feature>
<feature type="site" description="Involved in the stabilization of negative charge on the oxyanion by the formation of the oxyanion hole" evidence="1">
    <location>
        <position position="151"/>
    </location>
</feature>
<feature type="site" description="Cleavage; by autolysis" evidence="1">
    <location>
        <begin position="225"/>
        <end position="226"/>
    </location>
</feature>
<proteinExistence type="inferred from homology"/>
<gene>
    <name type="ORF">SPBC1271.14</name>
</gene>
<comment type="function">
    <text evidence="1">Catalyzes two activities which are involved in the cyclic version of arginine biosynthesis: the synthesis of acetylglutamate from glutamate and acetyl-CoA, and of ornithine by transacetylation between acetylornithine and glutamate.</text>
</comment>
<comment type="catalytic activity">
    <reaction evidence="1">
        <text>N(2)-acetyl-L-ornithine + L-glutamate = N-acetyl-L-glutamate + L-ornithine</text>
        <dbReference type="Rhea" id="RHEA:15349"/>
        <dbReference type="ChEBI" id="CHEBI:29985"/>
        <dbReference type="ChEBI" id="CHEBI:44337"/>
        <dbReference type="ChEBI" id="CHEBI:46911"/>
        <dbReference type="ChEBI" id="CHEBI:57805"/>
        <dbReference type="EC" id="2.3.1.35"/>
    </reaction>
</comment>
<comment type="catalytic activity">
    <reaction evidence="1">
        <text>L-glutamate + acetyl-CoA = N-acetyl-L-glutamate + CoA + H(+)</text>
        <dbReference type="Rhea" id="RHEA:24292"/>
        <dbReference type="ChEBI" id="CHEBI:15378"/>
        <dbReference type="ChEBI" id="CHEBI:29985"/>
        <dbReference type="ChEBI" id="CHEBI:44337"/>
        <dbReference type="ChEBI" id="CHEBI:57287"/>
        <dbReference type="ChEBI" id="CHEBI:57288"/>
        <dbReference type="EC" id="2.3.1.1"/>
    </reaction>
</comment>
<comment type="pathway">
    <text evidence="1">Amino-acid biosynthesis; L-arginine biosynthesis; L-ornithine and N-acetyl-L-glutamate from L-glutamate and N(2)-acetyl-L-ornithine (cyclic): step 1/1.</text>
</comment>
<comment type="pathway">
    <text evidence="1">Amino-acid biosynthesis; L-arginine biosynthesis; N(2)-acetyl-L-ornithine from L-glutamate: step 1/4.</text>
</comment>
<comment type="subunit">
    <text evidence="1">Heterodimer of an alpha and a beta chain.</text>
</comment>
<comment type="subcellular location">
    <subcellularLocation>
        <location evidence="1 2">Mitochondrion matrix</location>
    </subcellularLocation>
</comment>
<comment type="PTM">
    <text evidence="1">The alpha and beta chains are autoproteolytically processed from a single precursor protein within the mitochondrion.</text>
</comment>
<comment type="miscellaneous">
    <text evidence="1">This protein may be expected to contain an N-terminal transit peptide but none has been predicted.</text>
</comment>
<comment type="similarity">
    <text evidence="1">Belongs to the ArgJ family.</text>
</comment>
<protein>
    <recommendedName>
        <fullName evidence="1">Arginine biosynthesis bifunctional protein ArgJ, mitochondrial</fullName>
    </recommendedName>
    <domain>
        <recommendedName>
            <fullName evidence="1">Glutamate N-acetyltransferase</fullName>
            <shortName evidence="1">GAT</shortName>
            <ecNumber evidence="1">2.3.1.35</ecNumber>
        </recommendedName>
        <alternativeName>
            <fullName evidence="1">Ornithine acetyltransferase</fullName>
            <shortName evidence="1">OATase</shortName>
        </alternativeName>
        <alternativeName>
            <fullName evidence="1">Ornithine transacetylase</fullName>
        </alternativeName>
    </domain>
    <domain>
        <recommendedName>
            <fullName evidence="1">Amino-acid acetyltransferase</fullName>
            <ecNumber evidence="1">2.3.1.1</ecNumber>
        </recommendedName>
        <alternativeName>
            <fullName evidence="1">N-acetylglutamate synthase</fullName>
            <shortName evidence="1">AGS</shortName>
        </alternativeName>
    </domain>
    <component>
        <recommendedName>
            <fullName evidence="1">Arginine biosynthesis bifunctional protein ArgJ alpha chain</fullName>
        </recommendedName>
    </component>
    <component>
        <recommendedName>
            <fullName evidence="1">Arginine biosynthesis bifunctional protein ArgJ beta chain</fullName>
        </recommendedName>
    </component>
</protein>
<keyword id="KW-0012">Acyltransferase</keyword>
<keyword id="KW-0028">Amino-acid biosynthesis</keyword>
<keyword id="KW-0055">Arginine biosynthesis</keyword>
<keyword id="KW-0068">Autocatalytic cleavage</keyword>
<keyword id="KW-0496">Mitochondrion</keyword>
<keyword id="KW-0511">Multifunctional enzyme</keyword>
<keyword id="KW-1185">Reference proteome</keyword>
<keyword id="KW-0808">Transferase</keyword>
<evidence type="ECO:0000255" key="1">
    <source>
        <dbReference type="HAMAP-Rule" id="MF_03124"/>
    </source>
</evidence>
<evidence type="ECO:0000269" key="2">
    <source>
    </source>
</evidence>
<reference key="1">
    <citation type="journal article" date="2002" name="Nature">
        <title>The genome sequence of Schizosaccharomyces pombe.</title>
        <authorList>
            <person name="Wood V."/>
            <person name="Gwilliam R."/>
            <person name="Rajandream M.A."/>
            <person name="Lyne M.H."/>
            <person name="Lyne R."/>
            <person name="Stewart A."/>
            <person name="Sgouros J.G."/>
            <person name="Peat N."/>
            <person name="Hayles J."/>
            <person name="Baker S.G."/>
            <person name="Basham D."/>
            <person name="Bowman S."/>
            <person name="Brooks K."/>
            <person name="Brown D."/>
            <person name="Brown S."/>
            <person name="Chillingworth T."/>
            <person name="Churcher C.M."/>
            <person name="Collins M."/>
            <person name="Connor R."/>
            <person name="Cronin A."/>
            <person name="Davis P."/>
            <person name="Feltwell T."/>
            <person name="Fraser A."/>
            <person name="Gentles S."/>
            <person name="Goble A."/>
            <person name="Hamlin N."/>
            <person name="Harris D.E."/>
            <person name="Hidalgo J."/>
            <person name="Hodgson G."/>
            <person name="Holroyd S."/>
            <person name="Hornsby T."/>
            <person name="Howarth S."/>
            <person name="Huckle E.J."/>
            <person name="Hunt S."/>
            <person name="Jagels K."/>
            <person name="James K.D."/>
            <person name="Jones L."/>
            <person name="Jones M."/>
            <person name="Leather S."/>
            <person name="McDonald S."/>
            <person name="McLean J."/>
            <person name="Mooney P."/>
            <person name="Moule S."/>
            <person name="Mungall K.L."/>
            <person name="Murphy L.D."/>
            <person name="Niblett D."/>
            <person name="Odell C."/>
            <person name="Oliver K."/>
            <person name="O'Neil S."/>
            <person name="Pearson D."/>
            <person name="Quail M.A."/>
            <person name="Rabbinowitsch E."/>
            <person name="Rutherford K.M."/>
            <person name="Rutter S."/>
            <person name="Saunders D."/>
            <person name="Seeger K."/>
            <person name="Sharp S."/>
            <person name="Skelton J."/>
            <person name="Simmonds M.N."/>
            <person name="Squares R."/>
            <person name="Squares S."/>
            <person name="Stevens K."/>
            <person name="Taylor K."/>
            <person name="Taylor R.G."/>
            <person name="Tivey A."/>
            <person name="Walsh S.V."/>
            <person name="Warren T."/>
            <person name="Whitehead S."/>
            <person name="Woodward J.R."/>
            <person name="Volckaert G."/>
            <person name="Aert R."/>
            <person name="Robben J."/>
            <person name="Grymonprez B."/>
            <person name="Weltjens I."/>
            <person name="Vanstreels E."/>
            <person name="Rieger M."/>
            <person name="Schaefer M."/>
            <person name="Mueller-Auer S."/>
            <person name="Gabel C."/>
            <person name="Fuchs M."/>
            <person name="Duesterhoeft A."/>
            <person name="Fritzc C."/>
            <person name="Holzer E."/>
            <person name="Moestl D."/>
            <person name="Hilbert H."/>
            <person name="Borzym K."/>
            <person name="Langer I."/>
            <person name="Beck A."/>
            <person name="Lehrach H."/>
            <person name="Reinhardt R."/>
            <person name="Pohl T.M."/>
            <person name="Eger P."/>
            <person name="Zimmermann W."/>
            <person name="Wedler H."/>
            <person name="Wambutt R."/>
            <person name="Purnelle B."/>
            <person name="Goffeau A."/>
            <person name="Cadieu E."/>
            <person name="Dreano S."/>
            <person name="Gloux S."/>
            <person name="Lelaure V."/>
            <person name="Mottier S."/>
            <person name="Galibert F."/>
            <person name="Aves S.J."/>
            <person name="Xiang Z."/>
            <person name="Hunt C."/>
            <person name="Moore K."/>
            <person name="Hurst S.M."/>
            <person name="Lucas M."/>
            <person name="Rochet M."/>
            <person name="Gaillardin C."/>
            <person name="Tallada V.A."/>
            <person name="Garzon A."/>
            <person name="Thode G."/>
            <person name="Daga R.R."/>
            <person name="Cruzado L."/>
            <person name="Jimenez J."/>
            <person name="Sanchez M."/>
            <person name="del Rey F."/>
            <person name="Benito J."/>
            <person name="Dominguez A."/>
            <person name="Revuelta J.L."/>
            <person name="Moreno S."/>
            <person name="Armstrong J."/>
            <person name="Forsburg S.L."/>
            <person name="Cerutti L."/>
            <person name="Lowe T."/>
            <person name="McCombie W.R."/>
            <person name="Paulsen I."/>
            <person name="Potashkin J."/>
            <person name="Shpakovski G.V."/>
            <person name="Ussery D."/>
            <person name="Barrell B.G."/>
            <person name="Nurse P."/>
        </authorList>
    </citation>
    <scope>NUCLEOTIDE SEQUENCE [LARGE SCALE GENOMIC DNA]</scope>
    <source>
        <strain>972 / ATCC 24843</strain>
    </source>
</reference>
<reference key="2">
    <citation type="journal article" date="2006" name="Nat. Biotechnol.">
        <title>ORFeome cloning and global analysis of protein localization in the fission yeast Schizosaccharomyces pombe.</title>
        <authorList>
            <person name="Matsuyama A."/>
            <person name="Arai R."/>
            <person name="Yashiroda Y."/>
            <person name="Shirai A."/>
            <person name="Kamata A."/>
            <person name="Sekido S."/>
            <person name="Kobayashi Y."/>
            <person name="Hashimoto A."/>
            <person name="Hamamoto M."/>
            <person name="Hiraoka Y."/>
            <person name="Horinouchi S."/>
            <person name="Yoshida M."/>
        </authorList>
    </citation>
    <scope>SUBCELLULAR LOCATION [LARGE SCALE ANALYSIS]</scope>
</reference>
<sequence length="445" mass="47287">MQTKIFARLAGIGRARFVGTMPDKTKFISKSGTYPQGFSLNGIASGVKANGKKDLAILFSSRPCNAAAVFTKNAFQAAPVQVSRQTLNGCGGKDIHCVVFNSGCANAVTGEGGLMDAQLITAEADNLTRPHWTSWTENSEEFPSSLVMSTGVIGQRLKLDKIQSGLEHAVEDLGSTHEYWMRAAEAICTTDTFPKLVSRELSIAGKVYRIAGFAKGAGMINPNLATLLGLFVTDAPISVDAVRSILRHAINNSFNSISIDGDTSTNDTIAFLANGAAGGSEITKSSPAYKEIRDAVTDIAQQLAKLVVRDGEGATKFVTVQVRGARSEKDAALVASTISNSALVKTAFFGEDANWGRILCAVGYSGAAVNPPATTVSFIPADGTEPLKLLVNGEPQNVDETRASEILSQDELTVDVDLGCGPYAKTNWTCDFSYDYVRINADYRS</sequence>
<accession>O94346</accession>